<feature type="chain" id="PRO_0000047609" description="Zinc finger and BTB domain-containing protein 6">
    <location>
        <begin position="1"/>
        <end position="423"/>
    </location>
</feature>
<feature type="domain" description="BTB" evidence="3">
    <location>
        <begin position="33"/>
        <end position="97"/>
    </location>
</feature>
<feature type="zinc finger region" description="C2H2-type 1" evidence="4">
    <location>
        <begin position="300"/>
        <end position="322"/>
    </location>
</feature>
<feature type="zinc finger region" description="C2H2-type 2" evidence="4">
    <location>
        <begin position="325"/>
        <end position="347"/>
    </location>
</feature>
<feature type="zinc finger region" description="C2H2-type 3" evidence="4">
    <location>
        <begin position="353"/>
        <end position="375"/>
    </location>
</feature>
<feature type="zinc finger region" description="C2H2-type 4" evidence="4">
    <location>
        <begin position="381"/>
        <end position="404"/>
    </location>
</feature>
<feature type="modified residue" description="Phosphoserine" evidence="2">
    <location>
        <position position="201"/>
    </location>
</feature>
<feature type="sequence conflict" description="In Ref. 1; BAC31788." evidence="5" ref="1">
    <original>K</original>
    <variation>E</variation>
    <location>
        <position position="397"/>
    </location>
</feature>
<keyword id="KW-0238">DNA-binding</keyword>
<keyword id="KW-0479">Metal-binding</keyword>
<keyword id="KW-0539">Nucleus</keyword>
<keyword id="KW-0597">Phosphoprotein</keyword>
<keyword id="KW-1185">Reference proteome</keyword>
<keyword id="KW-0677">Repeat</keyword>
<keyword id="KW-0804">Transcription</keyword>
<keyword id="KW-0805">Transcription regulation</keyword>
<keyword id="KW-0862">Zinc</keyword>
<keyword id="KW-0863">Zinc-finger</keyword>
<reference key="1">
    <citation type="journal article" date="2005" name="Science">
        <title>The transcriptional landscape of the mammalian genome.</title>
        <authorList>
            <person name="Carninci P."/>
            <person name="Kasukawa T."/>
            <person name="Katayama S."/>
            <person name="Gough J."/>
            <person name="Frith M.C."/>
            <person name="Maeda N."/>
            <person name="Oyama R."/>
            <person name="Ravasi T."/>
            <person name="Lenhard B."/>
            <person name="Wells C."/>
            <person name="Kodzius R."/>
            <person name="Shimokawa K."/>
            <person name="Bajic V.B."/>
            <person name="Brenner S.E."/>
            <person name="Batalov S."/>
            <person name="Forrest A.R."/>
            <person name="Zavolan M."/>
            <person name="Davis M.J."/>
            <person name="Wilming L.G."/>
            <person name="Aidinis V."/>
            <person name="Allen J.E."/>
            <person name="Ambesi-Impiombato A."/>
            <person name="Apweiler R."/>
            <person name="Aturaliya R.N."/>
            <person name="Bailey T.L."/>
            <person name="Bansal M."/>
            <person name="Baxter L."/>
            <person name="Beisel K.W."/>
            <person name="Bersano T."/>
            <person name="Bono H."/>
            <person name="Chalk A.M."/>
            <person name="Chiu K.P."/>
            <person name="Choudhary V."/>
            <person name="Christoffels A."/>
            <person name="Clutterbuck D.R."/>
            <person name="Crowe M.L."/>
            <person name="Dalla E."/>
            <person name="Dalrymple B.P."/>
            <person name="de Bono B."/>
            <person name="Della Gatta G."/>
            <person name="di Bernardo D."/>
            <person name="Down T."/>
            <person name="Engstrom P."/>
            <person name="Fagiolini M."/>
            <person name="Faulkner G."/>
            <person name="Fletcher C.F."/>
            <person name="Fukushima T."/>
            <person name="Furuno M."/>
            <person name="Futaki S."/>
            <person name="Gariboldi M."/>
            <person name="Georgii-Hemming P."/>
            <person name="Gingeras T.R."/>
            <person name="Gojobori T."/>
            <person name="Green R.E."/>
            <person name="Gustincich S."/>
            <person name="Harbers M."/>
            <person name="Hayashi Y."/>
            <person name="Hensch T.K."/>
            <person name="Hirokawa N."/>
            <person name="Hill D."/>
            <person name="Huminiecki L."/>
            <person name="Iacono M."/>
            <person name="Ikeo K."/>
            <person name="Iwama A."/>
            <person name="Ishikawa T."/>
            <person name="Jakt M."/>
            <person name="Kanapin A."/>
            <person name="Katoh M."/>
            <person name="Kawasawa Y."/>
            <person name="Kelso J."/>
            <person name="Kitamura H."/>
            <person name="Kitano H."/>
            <person name="Kollias G."/>
            <person name="Krishnan S.P."/>
            <person name="Kruger A."/>
            <person name="Kummerfeld S.K."/>
            <person name="Kurochkin I.V."/>
            <person name="Lareau L.F."/>
            <person name="Lazarevic D."/>
            <person name="Lipovich L."/>
            <person name="Liu J."/>
            <person name="Liuni S."/>
            <person name="McWilliam S."/>
            <person name="Madan Babu M."/>
            <person name="Madera M."/>
            <person name="Marchionni L."/>
            <person name="Matsuda H."/>
            <person name="Matsuzawa S."/>
            <person name="Miki H."/>
            <person name="Mignone F."/>
            <person name="Miyake S."/>
            <person name="Morris K."/>
            <person name="Mottagui-Tabar S."/>
            <person name="Mulder N."/>
            <person name="Nakano N."/>
            <person name="Nakauchi H."/>
            <person name="Ng P."/>
            <person name="Nilsson R."/>
            <person name="Nishiguchi S."/>
            <person name="Nishikawa S."/>
            <person name="Nori F."/>
            <person name="Ohara O."/>
            <person name="Okazaki Y."/>
            <person name="Orlando V."/>
            <person name="Pang K.C."/>
            <person name="Pavan W.J."/>
            <person name="Pavesi G."/>
            <person name="Pesole G."/>
            <person name="Petrovsky N."/>
            <person name="Piazza S."/>
            <person name="Reed J."/>
            <person name="Reid J.F."/>
            <person name="Ring B.Z."/>
            <person name="Ringwald M."/>
            <person name="Rost B."/>
            <person name="Ruan Y."/>
            <person name="Salzberg S.L."/>
            <person name="Sandelin A."/>
            <person name="Schneider C."/>
            <person name="Schoenbach C."/>
            <person name="Sekiguchi K."/>
            <person name="Semple C.A."/>
            <person name="Seno S."/>
            <person name="Sessa L."/>
            <person name="Sheng Y."/>
            <person name="Shibata Y."/>
            <person name="Shimada H."/>
            <person name="Shimada K."/>
            <person name="Silva D."/>
            <person name="Sinclair B."/>
            <person name="Sperling S."/>
            <person name="Stupka E."/>
            <person name="Sugiura K."/>
            <person name="Sultana R."/>
            <person name="Takenaka Y."/>
            <person name="Taki K."/>
            <person name="Tammoja K."/>
            <person name="Tan S.L."/>
            <person name="Tang S."/>
            <person name="Taylor M.S."/>
            <person name="Tegner J."/>
            <person name="Teichmann S.A."/>
            <person name="Ueda H.R."/>
            <person name="van Nimwegen E."/>
            <person name="Verardo R."/>
            <person name="Wei C.L."/>
            <person name="Yagi K."/>
            <person name="Yamanishi H."/>
            <person name="Zabarovsky E."/>
            <person name="Zhu S."/>
            <person name="Zimmer A."/>
            <person name="Hide W."/>
            <person name="Bult C."/>
            <person name="Grimmond S.M."/>
            <person name="Teasdale R.D."/>
            <person name="Liu E.T."/>
            <person name="Brusic V."/>
            <person name="Quackenbush J."/>
            <person name="Wahlestedt C."/>
            <person name="Mattick J.S."/>
            <person name="Hume D.A."/>
            <person name="Kai C."/>
            <person name="Sasaki D."/>
            <person name="Tomaru Y."/>
            <person name="Fukuda S."/>
            <person name="Kanamori-Katayama M."/>
            <person name="Suzuki M."/>
            <person name="Aoki J."/>
            <person name="Arakawa T."/>
            <person name="Iida J."/>
            <person name="Imamura K."/>
            <person name="Itoh M."/>
            <person name="Kato T."/>
            <person name="Kawaji H."/>
            <person name="Kawagashira N."/>
            <person name="Kawashima T."/>
            <person name="Kojima M."/>
            <person name="Kondo S."/>
            <person name="Konno H."/>
            <person name="Nakano K."/>
            <person name="Ninomiya N."/>
            <person name="Nishio T."/>
            <person name="Okada M."/>
            <person name="Plessy C."/>
            <person name="Shibata K."/>
            <person name="Shiraki T."/>
            <person name="Suzuki S."/>
            <person name="Tagami M."/>
            <person name="Waki K."/>
            <person name="Watahiki A."/>
            <person name="Okamura-Oho Y."/>
            <person name="Suzuki H."/>
            <person name="Kawai J."/>
            <person name="Hayashizaki Y."/>
        </authorList>
    </citation>
    <scope>NUCLEOTIDE SEQUENCE [LARGE SCALE MRNA]</scope>
    <source>
        <strain>C57BL/6J</strain>
        <tissue>Brain cortex</tissue>
        <tissue>Eye</tissue>
    </source>
</reference>
<reference key="2">
    <citation type="journal article" date="2009" name="PLoS Biol.">
        <title>Lineage-specific biology revealed by a finished genome assembly of the mouse.</title>
        <authorList>
            <person name="Church D.M."/>
            <person name="Goodstadt L."/>
            <person name="Hillier L.W."/>
            <person name="Zody M.C."/>
            <person name="Goldstein S."/>
            <person name="She X."/>
            <person name="Bult C.J."/>
            <person name="Agarwala R."/>
            <person name="Cherry J.L."/>
            <person name="DiCuccio M."/>
            <person name="Hlavina W."/>
            <person name="Kapustin Y."/>
            <person name="Meric P."/>
            <person name="Maglott D."/>
            <person name="Birtle Z."/>
            <person name="Marques A.C."/>
            <person name="Graves T."/>
            <person name="Zhou S."/>
            <person name="Teague B."/>
            <person name="Potamousis K."/>
            <person name="Churas C."/>
            <person name="Place M."/>
            <person name="Herschleb J."/>
            <person name="Runnheim R."/>
            <person name="Forrest D."/>
            <person name="Amos-Landgraf J."/>
            <person name="Schwartz D.C."/>
            <person name="Cheng Z."/>
            <person name="Lindblad-Toh K."/>
            <person name="Eichler E.E."/>
            <person name="Ponting C.P."/>
        </authorList>
    </citation>
    <scope>NUCLEOTIDE SEQUENCE [LARGE SCALE GENOMIC DNA]</scope>
    <source>
        <strain>C57BL/6J</strain>
    </source>
</reference>
<reference key="3">
    <citation type="journal article" date="2004" name="Genome Res.">
        <title>The status, quality, and expansion of the NIH full-length cDNA project: the Mammalian Gene Collection (MGC).</title>
        <authorList>
            <consortium name="The MGC Project Team"/>
        </authorList>
    </citation>
    <scope>NUCLEOTIDE SEQUENCE [LARGE SCALE MRNA]</scope>
    <source>
        <tissue>Thymus</tissue>
    </source>
</reference>
<protein>
    <recommendedName>
        <fullName>Zinc finger and BTB domain-containing protein 6</fullName>
    </recommendedName>
    <alternativeName>
        <fullName>Zinc finger protein 482</fullName>
    </alternativeName>
</protein>
<evidence type="ECO:0000250" key="1"/>
<evidence type="ECO:0000250" key="2">
    <source>
        <dbReference type="UniProtKB" id="Q15916"/>
    </source>
</evidence>
<evidence type="ECO:0000255" key="3">
    <source>
        <dbReference type="PROSITE-ProRule" id="PRU00037"/>
    </source>
</evidence>
<evidence type="ECO:0000255" key="4">
    <source>
        <dbReference type="PROSITE-ProRule" id="PRU00042"/>
    </source>
</evidence>
<evidence type="ECO:0000305" key="5"/>
<dbReference type="EMBL" id="AK044125">
    <property type="protein sequence ID" value="BAC31788.1"/>
    <property type="molecule type" value="mRNA"/>
</dbReference>
<dbReference type="EMBL" id="AK050827">
    <property type="protein sequence ID" value="BAC34426.1"/>
    <property type="molecule type" value="mRNA"/>
</dbReference>
<dbReference type="EMBL" id="AK053443">
    <property type="protein sequence ID" value="BAC35387.1"/>
    <property type="molecule type" value="mRNA"/>
</dbReference>
<dbReference type="EMBL" id="AL953890">
    <property type="status" value="NOT_ANNOTATED_CDS"/>
    <property type="molecule type" value="Genomic_DNA"/>
</dbReference>
<dbReference type="EMBL" id="BC032933">
    <property type="protein sequence ID" value="AAH32933.1"/>
    <property type="molecule type" value="mRNA"/>
</dbReference>
<dbReference type="CCDS" id="CCDS16000.1"/>
<dbReference type="RefSeq" id="NP_666365.1">
    <property type="nucleotide sequence ID" value="NM_146253.5"/>
</dbReference>
<dbReference type="SMR" id="Q8K088"/>
<dbReference type="BioGRID" id="232307">
    <property type="interactions" value="3"/>
</dbReference>
<dbReference type="FunCoup" id="Q8K088">
    <property type="interactions" value="2670"/>
</dbReference>
<dbReference type="STRING" id="10090.ENSMUSP00000108554"/>
<dbReference type="iPTMnet" id="Q8K088"/>
<dbReference type="PhosphoSitePlus" id="Q8K088"/>
<dbReference type="PaxDb" id="10090-ENSMUSP00000108554"/>
<dbReference type="ProteomicsDB" id="302040"/>
<dbReference type="Antibodypedia" id="30390">
    <property type="antibodies" value="220 antibodies from 28 providers"/>
</dbReference>
<dbReference type="DNASU" id="241322"/>
<dbReference type="Ensembl" id="ENSMUST00000053098.6">
    <property type="protein sequence ID" value="ENSMUSP00000056100.6"/>
    <property type="gene ID" value="ENSMUSG00000066798.4"/>
</dbReference>
<dbReference type="Ensembl" id="ENSMUST00000112932.2">
    <property type="protein sequence ID" value="ENSMUSP00000108554.2"/>
    <property type="gene ID" value="ENSMUSG00000066798.4"/>
</dbReference>
<dbReference type="GeneID" id="241322"/>
<dbReference type="KEGG" id="mmu:241322"/>
<dbReference type="UCSC" id="uc008jms.2">
    <property type="organism name" value="mouse"/>
</dbReference>
<dbReference type="AGR" id="MGI:2442998"/>
<dbReference type="CTD" id="10773"/>
<dbReference type="MGI" id="MGI:2442998">
    <property type="gene designation" value="Zbtb6"/>
</dbReference>
<dbReference type="VEuPathDB" id="HostDB:ENSMUSG00000066798"/>
<dbReference type="eggNOG" id="KOG1721">
    <property type="taxonomic scope" value="Eukaryota"/>
</dbReference>
<dbReference type="GeneTree" id="ENSGT00940000161459"/>
<dbReference type="HOGENOM" id="CLU_037856_1_0_1"/>
<dbReference type="InParanoid" id="Q8K088"/>
<dbReference type="OMA" id="TEMSGNH"/>
<dbReference type="OrthoDB" id="1405595at2759"/>
<dbReference type="PhylomeDB" id="Q8K088"/>
<dbReference type="TreeFam" id="TF333162"/>
<dbReference type="BioGRID-ORCS" id="241322">
    <property type="hits" value="2 hits in 78 CRISPR screens"/>
</dbReference>
<dbReference type="ChiTaRS" id="Zbtb6">
    <property type="organism name" value="mouse"/>
</dbReference>
<dbReference type="PRO" id="PR:Q8K088"/>
<dbReference type="Proteomes" id="UP000000589">
    <property type="component" value="Chromosome 2"/>
</dbReference>
<dbReference type="RNAct" id="Q8K088">
    <property type="molecule type" value="protein"/>
</dbReference>
<dbReference type="Bgee" id="ENSMUSG00000066798">
    <property type="expression patterns" value="Expressed in dorsal pancreas and 218 other cell types or tissues"/>
</dbReference>
<dbReference type="GO" id="GO:0005739">
    <property type="term" value="C:mitochondrion"/>
    <property type="evidence" value="ECO:0007669"/>
    <property type="project" value="Ensembl"/>
</dbReference>
<dbReference type="GO" id="GO:0005654">
    <property type="term" value="C:nucleoplasm"/>
    <property type="evidence" value="ECO:0007669"/>
    <property type="project" value="Ensembl"/>
</dbReference>
<dbReference type="GO" id="GO:0003677">
    <property type="term" value="F:DNA binding"/>
    <property type="evidence" value="ECO:0007669"/>
    <property type="project" value="UniProtKB-KW"/>
</dbReference>
<dbReference type="GO" id="GO:0008270">
    <property type="term" value="F:zinc ion binding"/>
    <property type="evidence" value="ECO:0007669"/>
    <property type="project" value="UniProtKB-KW"/>
</dbReference>
<dbReference type="CDD" id="cd18197">
    <property type="entry name" value="BTB_POZ_ZBTB6"/>
    <property type="match status" value="1"/>
</dbReference>
<dbReference type="FunFam" id="3.30.160.60:FF:000333">
    <property type="entry name" value="Zinc finger and BTB domain-containing protein 26"/>
    <property type="match status" value="1"/>
</dbReference>
<dbReference type="FunFam" id="3.30.710.10:FF:000047">
    <property type="entry name" value="Zinc finger and BTB domain-containing protein 26"/>
    <property type="match status" value="1"/>
</dbReference>
<dbReference type="FunFam" id="3.30.160.60:FF:001873">
    <property type="entry name" value="Zinc finger and BTB domain-containing protein 6"/>
    <property type="match status" value="1"/>
</dbReference>
<dbReference type="Gene3D" id="3.30.160.60">
    <property type="entry name" value="Classic Zinc Finger"/>
    <property type="match status" value="3"/>
</dbReference>
<dbReference type="Gene3D" id="3.30.710.10">
    <property type="entry name" value="Potassium Channel Kv1.1, Chain A"/>
    <property type="match status" value="1"/>
</dbReference>
<dbReference type="InterPro" id="IPR000210">
    <property type="entry name" value="BTB/POZ_dom"/>
</dbReference>
<dbReference type="InterPro" id="IPR011333">
    <property type="entry name" value="SKP1/BTB/POZ_sf"/>
</dbReference>
<dbReference type="InterPro" id="IPR036236">
    <property type="entry name" value="Znf_C2H2_sf"/>
</dbReference>
<dbReference type="InterPro" id="IPR013087">
    <property type="entry name" value="Znf_C2H2_type"/>
</dbReference>
<dbReference type="InterPro" id="IPR050457">
    <property type="entry name" value="ZnFinger_BTB_dom_contain"/>
</dbReference>
<dbReference type="PANTHER" id="PTHR46105">
    <property type="entry name" value="AGAP004733-PA"/>
    <property type="match status" value="1"/>
</dbReference>
<dbReference type="PANTHER" id="PTHR46105:SF5">
    <property type="entry name" value="ZINC FINGER AND BTB DOMAIN-CONTAINING PROTEIN 44 ISOFORM X1"/>
    <property type="match status" value="1"/>
</dbReference>
<dbReference type="Pfam" id="PF00651">
    <property type="entry name" value="BTB"/>
    <property type="match status" value="1"/>
</dbReference>
<dbReference type="Pfam" id="PF00096">
    <property type="entry name" value="zf-C2H2"/>
    <property type="match status" value="2"/>
</dbReference>
<dbReference type="SMART" id="SM00225">
    <property type="entry name" value="BTB"/>
    <property type="match status" value="1"/>
</dbReference>
<dbReference type="SMART" id="SM00355">
    <property type="entry name" value="ZnF_C2H2"/>
    <property type="match status" value="4"/>
</dbReference>
<dbReference type="SUPFAM" id="SSF57667">
    <property type="entry name" value="beta-beta-alpha zinc fingers"/>
    <property type="match status" value="2"/>
</dbReference>
<dbReference type="SUPFAM" id="SSF54695">
    <property type="entry name" value="POZ domain"/>
    <property type="match status" value="1"/>
</dbReference>
<dbReference type="PROSITE" id="PS50097">
    <property type="entry name" value="BTB"/>
    <property type="match status" value="1"/>
</dbReference>
<dbReference type="PROSITE" id="PS00028">
    <property type="entry name" value="ZINC_FINGER_C2H2_1"/>
    <property type="match status" value="4"/>
</dbReference>
<dbReference type="PROSITE" id="PS50157">
    <property type="entry name" value="ZINC_FINGER_C2H2_2"/>
    <property type="match status" value="4"/>
</dbReference>
<gene>
    <name type="primary">Zbtb6</name>
    <name type="synonym">Zfp482</name>
    <name type="synonym">Znf482</name>
</gene>
<proteinExistence type="evidence at transcript level"/>
<name>ZBTB6_MOUSE</name>
<organism>
    <name type="scientific">Mus musculus</name>
    <name type="common">Mouse</name>
    <dbReference type="NCBI Taxonomy" id="10090"/>
    <lineage>
        <taxon>Eukaryota</taxon>
        <taxon>Metazoa</taxon>
        <taxon>Chordata</taxon>
        <taxon>Craniata</taxon>
        <taxon>Vertebrata</taxon>
        <taxon>Euteleostomi</taxon>
        <taxon>Mammalia</taxon>
        <taxon>Eutheria</taxon>
        <taxon>Euarchontoglires</taxon>
        <taxon>Glires</taxon>
        <taxon>Rodentia</taxon>
        <taxon>Myomorpha</taxon>
        <taxon>Muroidea</taxon>
        <taxon>Muridae</taxon>
        <taxon>Murinae</taxon>
        <taxon>Mus</taxon>
        <taxon>Mus</taxon>
    </lineage>
</organism>
<comment type="function">
    <text>May be involved in transcriptional regulation.</text>
</comment>
<comment type="subcellular location">
    <subcellularLocation>
        <location evidence="1">Nucleus</location>
    </subcellularLocation>
</comment>
<accession>Q8K088</accession>
<accession>A2AWA4</accession>
<accession>Q8BLM4</accession>
<sequence length="423" mass="48188">MAAESDVLHFQFEQQGDVVLQKMNLLRQQNLFCDVSIYINDTEFQGHKVILAACSTFMRDQFLLTQSKHVRITILQSAEVGWKLLLSCYTGALEVKRKELLKYLTAASYLQMVHIVEKCTEALSKYLEIDLSMKNNQHTDLCQSSDTDVKNEEENSDKDCEIIEISEDSPVNLDFHVKEEESNALQSAAETLTSERMRMQSPELSAVDGGFKENEICILHVESISTDDVENGQFSQPCTSSKAGIYFPETQHSLINSTVENRVTEVPGNTNQGLFSENSDGSHGTVNEIQNLDENFSLRHQCPRCPRGFLHVENYLRHLKMHKLFLCLQCGKTFTQKKNLNRHIRGHMGIRPFQCTVCLKTFTAKSTLQDHLNIHSGDRPYKCHCCDMDFKHKSALKKHLTSVHGRSSGEKLSRPDLKRQNLL</sequence>